<gene>
    <name evidence="1" type="primary">matK</name>
</gene>
<proteinExistence type="inferred from homology"/>
<comment type="function">
    <text evidence="1">Usually encoded in the trnK tRNA gene intron. Probably assists in splicing its own and other chloroplast group II introns.</text>
</comment>
<comment type="subcellular location">
    <subcellularLocation>
        <location>Plastid</location>
        <location>Chloroplast</location>
    </subcellularLocation>
</comment>
<comment type="similarity">
    <text evidence="1">Belongs to the intron maturase 2 family. MatK subfamily.</text>
</comment>
<name>MATK_TRIHI</name>
<feature type="chain" id="PRO_0000143746" description="Maturase K">
    <location>
        <begin position="1"/>
        <end position="506"/>
    </location>
</feature>
<keyword id="KW-0150">Chloroplast</keyword>
<keyword id="KW-0507">mRNA processing</keyword>
<keyword id="KW-0934">Plastid</keyword>
<keyword id="KW-0694">RNA-binding</keyword>
<keyword id="KW-0819">tRNA processing</keyword>
<dbReference type="EMBL" id="AF522124">
    <property type="protein sequence ID" value="AAM82116.1"/>
    <property type="molecule type" value="Genomic_DNA"/>
</dbReference>
<dbReference type="GO" id="GO:0009507">
    <property type="term" value="C:chloroplast"/>
    <property type="evidence" value="ECO:0007669"/>
    <property type="project" value="UniProtKB-SubCell"/>
</dbReference>
<dbReference type="GO" id="GO:0003723">
    <property type="term" value="F:RNA binding"/>
    <property type="evidence" value="ECO:0007669"/>
    <property type="project" value="UniProtKB-KW"/>
</dbReference>
<dbReference type="GO" id="GO:0006397">
    <property type="term" value="P:mRNA processing"/>
    <property type="evidence" value="ECO:0007669"/>
    <property type="project" value="UniProtKB-KW"/>
</dbReference>
<dbReference type="GO" id="GO:0008380">
    <property type="term" value="P:RNA splicing"/>
    <property type="evidence" value="ECO:0007669"/>
    <property type="project" value="UniProtKB-UniRule"/>
</dbReference>
<dbReference type="GO" id="GO:0008033">
    <property type="term" value="P:tRNA processing"/>
    <property type="evidence" value="ECO:0007669"/>
    <property type="project" value="UniProtKB-KW"/>
</dbReference>
<dbReference type="HAMAP" id="MF_01390">
    <property type="entry name" value="MatK"/>
    <property type="match status" value="1"/>
</dbReference>
<dbReference type="InterPro" id="IPR024937">
    <property type="entry name" value="Domain_X"/>
</dbReference>
<dbReference type="InterPro" id="IPR002866">
    <property type="entry name" value="Maturase_MatK"/>
</dbReference>
<dbReference type="InterPro" id="IPR024942">
    <property type="entry name" value="Maturase_MatK_N"/>
</dbReference>
<dbReference type="PANTHER" id="PTHR34811">
    <property type="entry name" value="MATURASE K"/>
    <property type="match status" value="1"/>
</dbReference>
<dbReference type="PANTHER" id="PTHR34811:SF1">
    <property type="entry name" value="MATURASE K"/>
    <property type="match status" value="1"/>
</dbReference>
<dbReference type="Pfam" id="PF01348">
    <property type="entry name" value="Intron_maturas2"/>
    <property type="match status" value="1"/>
</dbReference>
<dbReference type="Pfam" id="PF01824">
    <property type="entry name" value="MatK_N"/>
    <property type="match status" value="1"/>
</dbReference>
<protein>
    <recommendedName>
        <fullName evidence="1">Maturase K</fullName>
    </recommendedName>
    <alternativeName>
        <fullName evidence="1">Intron maturase</fullName>
    </alternativeName>
</protein>
<sequence length="506" mass="61046">MKEYQVYLERARSRQQDFLYPLIFREYIYGLAYSHNWNRSIFVENGGYDDKYSLLNVKRLITRMYQQNHLIISTNDSNKNPFWGYNKNFYSQTISEGFAIVVEIPFFLQLSSSLEEAEIIKSYKNVRSIHSIFPFLEDKFTYLNYVSDIRIPYPIHLEILVQILRYWVKDAPFFHLLRLFLYHFSNWNRFITTKKSISTFSKSNPRLFLFLYNFYVCEYESIFLFLRNKSSHLRLKSFSVFLERIFFYAKREHLVEVFAKDFSYPLPFFKDPNIHYVRYQGKCILASKNVPFLMNKWKHYFIHLWQCFFDVWSQPRTININQLSEHSFQLLGYFSNVRLNRSVVRSQMLQNTFLIEIVSKKLDIIVPIIPLIRSLAKAKFCNVLGHPISKPVWADSSDFDIIERFLRICRNLSHYYNGSSKKKSLYRIKYILRLSCIKTLACKHKSTVRAFLKRSGSEELLEEFFTEEEEILSLIFPRDSFTLHRFYRNRIWYLDILFSNDLVNDE</sequence>
<evidence type="ECO:0000255" key="1">
    <source>
        <dbReference type="HAMAP-Rule" id="MF_01390"/>
    </source>
</evidence>
<organism>
    <name type="scientific">Trifolium hirtum</name>
    <name type="common">Rose clover</name>
    <dbReference type="NCBI Taxonomy" id="60915"/>
    <lineage>
        <taxon>Eukaryota</taxon>
        <taxon>Viridiplantae</taxon>
        <taxon>Streptophyta</taxon>
        <taxon>Embryophyta</taxon>
        <taxon>Tracheophyta</taxon>
        <taxon>Spermatophyta</taxon>
        <taxon>Magnoliopsida</taxon>
        <taxon>eudicotyledons</taxon>
        <taxon>Gunneridae</taxon>
        <taxon>Pentapetalae</taxon>
        <taxon>rosids</taxon>
        <taxon>fabids</taxon>
        <taxon>Fabales</taxon>
        <taxon>Fabaceae</taxon>
        <taxon>Papilionoideae</taxon>
        <taxon>50 kb inversion clade</taxon>
        <taxon>NPAAA clade</taxon>
        <taxon>Hologalegina</taxon>
        <taxon>IRL clade</taxon>
        <taxon>Trifolieae</taxon>
        <taxon>Trifolium</taxon>
    </lineage>
</organism>
<reference key="1">
    <citation type="book" date="2003" name="Advances in legume systematics - part 10">
        <title>Phylogenetic analyses of tribes Trifolieae and Vicieae based on sequences of the plastid gene matK (Papilionoideae: Leguminosae).</title>
        <editorList>
            <person name="Klitgaard B.B."/>
            <person name="Bruneau A."/>
        </editorList>
        <authorList>
            <person name="Steele K.P."/>
            <person name="Wojciechowski M.F."/>
        </authorList>
    </citation>
    <scope>NUCLEOTIDE SEQUENCE [GENOMIC DNA]</scope>
</reference>
<geneLocation type="chloroplast"/>
<accession>Q8MCN1</accession>